<sequence>MAKNAKFRVPFRRRREGKTDFRQRLGLLLSGKPRLVARKSLNNVIAQLMAYDEKGDVVLVSAHSRELVKMGYKGHCGNLPAAYLTGLLLGKKAVKEGAEEAILDKGLHRATKGAAIFAVLKGALDAGMDIPHGDEIIADEERLNGTHVKNYAESLKEDADAYKKQFSKYLEKGLNPEDLPEHVEELKEKILNL</sequence>
<name>RL18_METM6</name>
<proteinExistence type="inferred from homology"/>
<evidence type="ECO:0000255" key="1">
    <source>
        <dbReference type="HAMAP-Rule" id="MF_01337"/>
    </source>
</evidence>
<evidence type="ECO:0000305" key="2"/>
<accession>A9A9P5</accession>
<comment type="function">
    <text evidence="1">This is one of the proteins that bind and probably mediate the attachment of the 5S RNA into the large ribosomal subunit, where it forms part of the central protuberance.</text>
</comment>
<comment type="subunit">
    <text evidence="1">Part of the 50S ribosomal subunit. Contacts the 5S and 23S rRNAs.</text>
</comment>
<comment type="similarity">
    <text evidence="1">Belongs to the universal ribosomal protein uL18 family.</text>
</comment>
<organism>
    <name type="scientific">Methanococcus maripaludis (strain C6 / ATCC BAA-1332)</name>
    <dbReference type="NCBI Taxonomy" id="444158"/>
    <lineage>
        <taxon>Archaea</taxon>
        <taxon>Methanobacteriati</taxon>
        <taxon>Methanobacteriota</taxon>
        <taxon>Methanomada group</taxon>
        <taxon>Methanococci</taxon>
        <taxon>Methanococcales</taxon>
        <taxon>Methanococcaceae</taxon>
        <taxon>Methanococcus</taxon>
    </lineage>
</organism>
<feature type="chain" id="PRO_1000142688" description="Large ribosomal subunit protein uL18">
    <location>
        <begin position="1"/>
        <end position="193"/>
    </location>
</feature>
<gene>
    <name evidence="1" type="primary">rpl18</name>
    <name type="ordered locus">MmarC6_1255</name>
</gene>
<dbReference type="EMBL" id="CP000867">
    <property type="protein sequence ID" value="ABX02068.1"/>
    <property type="molecule type" value="Genomic_DNA"/>
</dbReference>
<dbReference type="SMR" id="A9A9P5"/>
<dbReference type="STRING" id="444158.MmarC6_1255"/>
<dbReference type="KEGG" id="mmx:MmarC6_1255"/>
<dbReference type="eggNOG" id="arCOG04088">
    <property type="taxonomic scope" value="Archaea"/>
</dbReference>
<dbReference type="HOGENOM" id="CLU_056222_2_0_2"/>
<dbReference type="OrthoDB" id="8644at2157"/>
<dbReference type="PhylomeDB" id="A9A9P5"/>
<dbReference type="GO" id="GO:0022625">
    <property type="term" value="C:cytosolic large ribosomal subunit"/>
    <property type="evidence" value="ECO:0007669"/>
    <property type="project" value="TreeGrafter"/>
</dbReference>
<dbReference type="GO" id="GO:0008097">
    <property type="term" value="F:5S rRNA binding"/>
    <property type="evidence" value="ECO:0007669"/>
    <property type="project" value="InterPro"/>
</dbReference>
<dbReference type="GO" id="GO:0003735">
    <property type="term" value="F:structural constituent of ribosome"/>
    <property type="evidence" value="ECO:0007669"/>
    <property type="project" value="InterPro"/>
</dbReference>
<dbReference type="GO" id="GO:0000027">
    <property type="term" value="P:ribosomal large subunit assembly"/>
    <property type="evidence" value="ECO:0007669"/>
    <property type="project" value="TreeGrafter"/>
</dbReference>
<dbReference type="GO" id="GO:0006412">
    <property type="term" value="P:translation"/>
    <property type="evidence" value="ECO:0007669"/>
    <property type="project" value="UniProtKB-UniRule"/>
</dbReference>
<dbReference type="CDD" id="cd00432">
    <property type="entry name" value="Ribosomal_L18_L5e"/>
    <property type="match status" value="1"/>
</dbReference>
<dbReference type="Gene3D" id="3.30.420.100">
    <property type="match status" value="1"/>
</dbReference>
<dbReference type="HAMAP" id="MF_01337_A">
    <property type="entry name" value="Ribosomal_uL18_A"/>
    <property type="match status" value="1"/>
</dbReference>
<dbReference type="InterPro" id="IPR005485">
    <property type="entry name" value="Rbsml_uL18_euk"/>
</dbReference>
<dbReference type="NCBIfam" id="NF006342">
    <property type="entry name" value="PRK08569.1"/>
    <property type="match status" value="1"/>
</dbReference>
<dbReference type="PANTHER" id="PTHR23410:SF12">
    <property type="entry name" value="LARGE RIBOSOMAL SUBUNIT PROTEIN UL18"/>
    <property type="match status" value="1"/>
</dbReference>
<dbReference type="PANTHER" id="PTHR23410">
    <property type="entry name" value="RIBOSOMAL PROTEIN L5-RELATED"/>
    <property type="match status" value="1"/>
</dbReference>
<dbReference type="Pfam" id="PF17144">
    <property type="entry name" value="Ribosomal_L5e"/>
    <property type="match status" value="2"/>
</dbReference>
<dbReference type="SUPFAM" id="SSF53137">
    <property type="entry name" value="Translational machinery components"/>
    <property type="match status" value="1"/>
</dbReference>
<protein>
    <recommendedName>
        <fullName evidence="1">Large ribosomal subunit protein uL18</fullName>
    </recommendedName>
    <alternativeName>
        <fullName evidence="2">50S ribosomal protein L18</fullName>
    </alternativeName>
</protein>
<reference key="1">
    <citation type="submission" date="2007-10" db="EMBL/GenBank/DDBJ databases">
        <title>Complete sequence of Methanococcus maripaludis C6.</title>
        <authorList>
            <consortium name="US DOE Joint Genome Institute"/>
            <person name="Copeland A."/>
            <person name="Lucas S."/>
            <person name="Lapidus A."/>
            <person name="Barry K."/>
            <person name="Glavina del Rio T."/>
            <person name="Dalin E."/>
            <person name="Tice H."/>
            <person name="Pitluck S."/>
            <person name="Clum A."/>
            <person name="Schmutz J."/>
            <person name="Larimer F."/>
            <person name="Land M."/>
            <person name="Hauser L."/>
            <person name="Kyrpides N."/>
            <person name="Mikhailova N."/>
            <person name="Sieprawska-Lupa M."/>
            <person name="Whitman W.B."/>
            <person name="Richardson P."/>
        </authorList>
    </citation>
    <scope>NUCLEOTIDE SEQUENCE [LARGE SCALE GENOMIC DNA]</scope>
    <source>
        <strain>C6 / ATCC BAA-1332</strain>
    </source>
</reference>
<keyword id="KW-0687">Ribonucleoprotein</keyword>
<keyword id="KW-0689">Ribosomal protein</keyword>
<keyword id="KW-0694">RNA-binding</keyword>
<keyword id="KW-0699">rRNA-binding</keyword>